<feature type="chain" id="PRO_0000460962" description="Polycomb protein EED">
    <location>
        <begin position="1"/>
        <end position="565"/>
    </location>
</feature>
<feature type="repeat" description="WD 1" evidence="2">
    <location>
        <begin position="89"/>
        <end position="133"/>
    </location>
</feature>
<feature type="repeat" description="WD 2" evidence="2">
    <location>
        <begin position="136"/>
        <end position="176"/>
    </location>
</feature>
<feature type="repeat" description="WD 3" evidence="2">
    <location>
        <begin position="185"/>
        <end position="224"/>
    </location>
</feature>
<feature type="repeat" description="WD 4" evidence="2">
    <location>
        <begin position="240"/>
        <end position="278"/>
    </location>
</feature>
<feature type="repeat" description="WD 5" evidence="2">
    <location>
        <begin position="519"/>
        <end position="559"/>
    </location>
</feature>
<feature type="region of interest" description="Disordered" evidence="3">
    <location>
        <begin position="417"/>
        <end position="488"/>
    </location>
</feature>
<feature type="compositionally biased region" description="Low complexity" evidence="3">
    <location>
        <begin position="429"/>
        <end position="450"/>
    </location>
</feature>
<feature type="compositionally biased region" description="Polar residues" evidence="3">
    <location>
        <begin position="451"/>
        <end position="468"/>
    </location>
</feature>
<feature type="helix" evidence="21">
    <location>
        <begin position="7"/>
        <end position="9"/>
    </location>
</feature>
<feature type="strand" evidence="25">
    <location>
        <begin position="13"/>
        <end position="20"/>
    </location>
</feature>
<feature type="strand" evidence="25">
    <location>
        <begin position="39"/>
        <end position="45"/>
    </location>
</feature>
<feature type="strand" evidence="24">
    <location>
        <begin position="47"/>
        <end position="49"/>
    </location>
</feature>
<feature type="strand" evidence="25">
    <location>
        <begin position="56"/>
        <end position="70"/>
    </location>
</feature>
<feature type="strand" evidence="25">
    <location>
        <begin position="81"/>
        <end position="89"/>
    </location>
</feature>
<feature type="strand" evidence="22">
    <location>
        <begin position="91"/>
        <end position="93"/>
    </location>
</feature>
<feature type="strand" evidence="25">
    <location>
        <begin position="95"/>
        <end position="102"/>
    </location>
</feature>
<feature type="turn" evidence="25">
    <location>
        <begin position="104"/>
        <end position="106"/>
    </location>
</feature>
<feature type="strand" evidence="25">
    <location>
        <begin position="109"/>
        <end position="115"/>
    </location>
</feature>
<feature type="strand" evidence="25">
    <location>
        <begin position="120"/>
        <end position="124"/>
    </location>
</feature>
<feature type="turn" evidence="25">
    <location>
        <begin position="125"/>
        <end position="128"/>
    </location>
</feature>
<feature type="strand" evidence="25">
    <location>
        <begin position="129"/>
        <end position="134"/>
    </location>
</feature>
<feature type="strand" evidence="25">
    <location>
        <begin position="141"/>
        <end position="146"/>
    </location>
</feature>
<feature type="strand" evidence="25">
    <location>
        <begin position="153"/>
        <end position="158"/>
    </location>
</feature>
<feature type="strand" evidence="25">
    <location>
        <begin position="163"/>
        <end position="167"/>
    </location>
</feature>
<feature type="helix" evidence="25">
    <location>
        <begin position="170"/>
        <end position="172"/>
    </location>
</feature>
<feature type="strand" evidence="22">
    <location>
        <begin position="173"/>
        <end position="175"/>
    </location>
</feature>
<feature type="strand" evidence="25">
    <location>
        <begin position="177"/>
        <end position="181"/>
    </location>
</feature>
<feature type="strand" evidence="25">
    <location>
        <begin position="190"/>
        <end position="195"/>
    </location>
</feature>
<feature type="strand" evidence="25">
    <location>
        <begin position="199"/>
        <end position="206"/>
    </location>
</feature>
<feature type="strand" evidence="25">
    <location>
        <begin position="211"/>
        <end position="215"/>
    </location>
</feature>
<feature type="strand" evidence="25">
    <location>
        <begin position="228"/>
        <end position="230"/>
    </location>
</feature>
<feature type="strand" evidence="25">
    <location>
        <begin position="234"/>
        <end position="238"/>
    </location>
</feature>
<feature type="strand" evidence="25">
    <location>
        <begin position="245"/>
        <end position="251"/>
    </location>
</feature>
<feature type="strand" evidence="25">
    <location>
        <begin position="254"/>
        <end position="259"/>
    </location>
</feature>
<feature type="turn" evidence="26">
    <location>
        <begin position="260"/>
        <end position="262"/>
    </location>
</feature>
<feature type="strand" evidence="25">
    <location>
        <begin position="264"/>
        <end position="270"/>
    </location>
</feature>
<feature type="strand" evidence="23">
    <location>
        <begin position="275"/>
        <end position="277"/>
    </location>
</feature>
<feature type="helix" evidence="25">
    <location>
        <begin position="282"/>
        <end position="284"/>
    </location>
</feature>
<feature type="strand" evidence="25">
    <location>
        <begin position="294"/>
        <end position="298"/>
    </location>
</feature>
<feature type="strand" evidence="22">
    <location>
        <begin position="305"/>
        <end position="308"/>
    </location>
</feature>
<feature type="strand" evidence="25">
    <location>
        <begin position="311"/>
        <end position="319"/>
    </location>
</feature>
<feature type="strand" evidence="25">
    <location>
        <begin position="332"/>
        <end position="334"/>
    </location>
</feature>
<feature type="strand" evidence="25">
    <location>
        <begin position="342"/>
        <end position="346"/>
    </location>
</feature>
<feature type="strand" evidence="25">
    <location>
        <begin position="348"/>
        <end position="356"/>
    </location>
</feature>
<feature type="helix" evidence="25">
    <location>
        <begin position="358"/>
        <end position="375"/>
    </location>
</feature>
<feature type="turn" evidence="25">
    <location>
        <begin position="376"/>
        <end position="379"/>
    </location>
</feature>
<feature type="strand" evidence="25">
    <location>
        <begin position="381"/>
        <end position="389"/>
    </location>
</feature>
<feature type="turn" evidence="25">
    <location>
        <begin position="392"/>
        <end position="395"/>
    </location>
</feature>
<feature type="helix" evidence="25">
    <location>
        <begin position="396"/>
        <end position="399"/>
    </location>
</feature>
<feature type="helix" evidence="25">
    <location>
        <begin position="400"/>
        <end position="402"/>
    </location>
</feature>
<feature type="strand" evidence="25">
    <location>
        <begin position="403"/>
        <end position="408"/>
    </location>
</feature>
<feature type="strand" evidence="22">
    <location>
        <begin position="487"/>
        <end position="489"/>
    </location>
</feature>
<feature type="helix" evidence="25">
    <location>
        <begin position="492"/>
        <end position="502"/>
    </location>
</feature>
<feature type="strand" evidence="25">
    <location>
        <begin position="514"/>
        <end position="518"/>
    </location>
</feature>
<feature type="strand" evidence="25">
    <location>
        <begin position="520"/>
        <end position="522"/>
    </location>
</feature>
<feature type="strand" evidence="25">
    <location>
        <begin position="525"/>
        <end position="530"/>
    </location>
</feature>
<feature type="strand" evidence="25">
    <location>
        <begin position="534"/>
        <end position="542"/>
    </location>
</feature>
<feature type="strand" evidence="25">
    <location>
        <begin position="545"/>
        <end position="552"/>
    </location>
</feature>
<reference key="1">
    <citation type="journal article" date="2011" name="Cell">
        <title>Insight into structure and assembly of the nuclear pore complex by utilizing the genome of a eukaryotic thermophile.</title>
        <authorList>
            <person name="Amlacher S."/>
            <person name="Sarges P."/>
            <person name="Flemming D."/>
            <person name="van Noort V."/>
            <person name="Kunze R."/>
            <person name="Devos D.P."/>
            <person name="Arumugam M."/>
            <person name="Bork P."/>
            <person name="Hurt E."/>
        </authorList>
    </citation>
    <scope>NUCLEOTIDE SEQUENCE [LARGE SCALE GENOMIC DNA]</scope>
    <source>
        <strain>DSM 1495 / CBS 144.50 / IMI 039719</strain>
    </source>
</reference>
<reference key="2">
    <citation type="journal article" date="2016" name="Science">
        <title>Comment on 'Structural basis of histone H3K27 trimethylation by an active polycomb repressive complex 2'.</title>
        <authorList>
            <person name="Zhang Y."/>
            <person name="Justin N."/>
            <person name="Wilson J.R."/>
            <person name="Gamblin S.J."/>
        </authorList>
    </citation>
    <scope>FUNCTION</scope>
</reference>
<reference evidence="12 13 14 15" key="3">
    <citation type="journal article" date="2015" name="Science">
        <title>Structural basis of histone H3K27 trimethylation by an active polycomb repressive complex 2.</title>
        <authorList>
            <person name="Jiao L."/>
            <person name="Liu X."/>
        </authorList>
    </citation>
    <scope>X-RAY CRYSTALLOGRAPHY (2.27 ANGSTROMS) IN COMPLEX WITH EZH2 AND SUZ12</scope>
    <scope>FUNCTION</scope>
    <scope>DOMAIN</scope>
    <scope>SUBUNIT</scope>
</reference>
<reference evidence="11 16 17" key="4">
    <citation type="journal article" date="2017" name="J. Biol. Chem.">
        <title>Polycomb repressive complex 2 in an autoinhibited state.</title>
        <authorList>
            <person name="Bratkowski M."/>
            <person name="Yang X."/>
            <person name="Liu X."/>
        </authorList>
    </citation>
    <scope>X-RAY CRYSTALLOGRAPHY (2.11 ANGSTROMS) IN COMPLEX WITH EZH2 AND SUZ12</scope>
    <scope>SUBUNIT</scope>
</reference>
<reference evidence="18 19 20" key="5">
    <citation type="journal article" date="2018" name="Sci. Rep.">
        <title>An evolutionarily conserved structural platform for PRC2 inhibition by a class of Ezh2 inhibitors.</title>
        <authorList>
            <person name="Bratkowski M."/>
            <person name="Yang X."/>
            <person name="Liu X."/>
        </authorList>
    </citation>
    <scope>X-RAY CRYSTALLOGRAPHY (2.28 ANGSTROMS) IN COMPLEX WITH EZH2 AND SUZ12</scope>
    <scope>SUBUNIT</scope>
</reference>
<gene>
    <name evidence="8" type="primary">EED</name>
    <name type="ORF">CTHT_0029920</name>
</gene>
<name>EED_CHATD</name>
<sequence length="565" mass="61840">MPASDSAEWELPRLRTSFIFQDDYKYLGDDGSVSQDLAEFFDVKFYPYSPPGAPPVFAATSKKHAVICRLTQTTDKDANPCEIIQLIRDDGNEANCASCWSKDPITDQPLLCIAGNEGNVKVYNVTEGKLYRTLVGHGGGINDLATSPANPYIIASASDDTTIRIWSLAPEHEKQPCVCILGGEGHSYDLLSVAFHDNGRYVLSAGHDQVINLWALPEFPNEHMEIPIVIYYPHFSSSEIHNNLVDCVAFYGDLILSRACHEDTIVLWRIEGFSSDDPIPGPLDAPTPTDMTKQTRSYFTPTVSPQSRPAMFTRLAQFHTPDCGVQFFMRFRMYHVPGKHPILAFANAKSKTFFWDLARFGEYARFMADLKEAQQSYNGRVVVVDQGQGISLAQAQQVHGPGVGVVMKPAWLVPKRVKKAPGAAGSGSGTAANGGHNNNNNNNNNNNNNNHETGSQRSFSATNNLSNSGRDKESASMVSASPDPDSPFGFSRETLQAWADMYDLSNPVGLIKAHRSLAIDGAFVGRQVGWSPEGEWCVVVGNGNRALIYQRWGKERGLGSGTPGA</sequence>
<proteinExistence type="evidence at protein level"/>
<organism>
    <name type="scientific">Chaetomium thermophilum (strain DSM 1495 / CBS 144.50 / IMI 039719)</name>
    <name type="common">Thermochaetoides thermophila</name>
    <dbReference type="NCBI Taxonomy" id="759272"/>
    <lineage>
        <taxon>Eukaryota</taxon>
        <taxon>Fungi</taxon>
        <taxon>Dikarya</taxon>
        <taxon>Ascomycota</taxon>
        <taxon>Pezizomycotina</taxon>
        <taxon>Sordariomycetes</taxon>
        <taxon>Sordariomycetidae</taxon>
        <taxon>Sordariales</taxon>
        <taxon>Chaetomiaceae</taxon>
        <taxon>Thermochaetoides</taxon>
    </lineage>
</organism>
<accession>G0S8H7</accession>
<comment type="function">
    <text evidence="4 5 6 7">Component of the of the Polycomb Repressive Complex 2 (PRC2), a histone H3 lysine methyltransferase responsible for generating mono-, di-, and tri-methylation on Lys27 (H3K27me1, H3K27me2 and H3K27me3) (PubMed:26472914, PubMed:29904056). The tri-methylated form is known to be critical in gene repression, and its proper placement is essential in defining repression patterns during development (PubMed:26472914, PubMed:28008037, PubMed:28607149, PubMed:29904056). EED is not a catalytic subunit but is required for the complex regulation of histone H3 lysine methylation by EZH2 (PubMed:26472914, PubMed:28008037, PubMed:28607149, PubMed:29904056).</text>
</comment>
<comment type="subunit">
    <text evidence="4 6 7">Component of the polycomb repressive complex 2 (PRC2) that consists of four core subunits icluding EZH2, EED, SUZ12, and RBBP4, among which EZH2 is the catalytic subunit and which minimally requires EED and SUZ12 for catalysis.</text>
</comment>
<comment type="subcellular location">
    <subcellularLocation>
        <location evidence="1">Nucleus</location>
    </subcellularLocation>
</comment>
<comment type="similarity">
    <text evidence="10">Belongs to the WD repeat ESC family.</text>
</comment>
<evidence type="ECO:0000250" key="1">
    <source>
        <dbReference type="UniProtKB" id="O75530"/>
    </source>
</evidence>
<evidence type="ECO:0000255" key="2"/>
<evidence type="ECO:0000256" key="3">
    <source>
        <dbReference type="SAM" id="MobiDB-lite"/>
    </source>
</evidence>
<evidence type="ECO:0000269" key="4">
    <source>
    </source>
</evidence>
<evidence type="ECO:0000269" key="5">
    <source>
    </source>
</evidence>
<evidence type="ECO:0000269" key="6">
    <source>
    </source>
</evidence>
<evidence type="ECO:0000269" key="7">
    <source>
    </source>
</evidence>
<evidence type="ECO:0000303" key="8">
    <source>
    </source>
</evidence>
<evidence type="ECO:0000303" key="9">
    <source>
    </source>
</evidence>
<evidence type="ECO:0000305" key="10"/>
<evidence type="ECO:0007744" key="11">
    <source>
        <dbReference type="PDB" id="5BJS"/>
    </source>
</evidence>
<evidence type="ECO:0007744" key="12">
    <source>
        <dbReference type="PDB" id="5KJH"/>
    </source>
</evidence>
<evidence type="ECO:0007744" key="13">
    <source>
        <dbReference type="PDB" id="5KJI"/>
    </source>
</evidence>
<evidence type="ECO:0007744" key="14">
    <source>
        <dbReference type="PDB" id="5KKL"/>
    </source>
</evidence>
<evidence type="ECO:0007744" key="15">
    <source>
        <dbReference type="PDB" id="5M5G"/>
    </source>
</evidence>
<evidence type="ECO:0007744" key="16">
    <source>
        <dbReference type="PDB" id="5TQR"/>
    </source>
</evidence>
<evidence type="ECO:0007744" key="17">
    <source>
        <dbReference type="PDB" id="5VK3"/>
    </source>
</evidence>
<evidence type="ECO:0007744" key="18">
    <source>
        <dbReference type="PDB" id="5WF7"/>
    </source>
</evidence>
<evidence type="ECO:0007744" key="19">
    <source>
        <dbReference type="PDB" id="5WFC"/>
    </source>
</evidence>
<evidence type="ECO:0007744" key="20">
    <source>
        <dbReference type="PDB" id="5WFD"/>
    </source>
</evidence>
<evidence type="ECO:0007829" key="21">
    <source>
        <dbReference type="PDB" id="5BJS"/>
    </source>
</evidence>
<evidence type="ECO:0007829" key="22">
    <source>
        <dbReference type="PDB" id="5KJH"/>
    </source>
</evidence>
<evidence type="ECO:0007829" key="23">
    <source>
        <dbReference type="PDB" id="5KJI"/>
    </source>
</evidence>
<evidence type="ECO:0007829" key="24">
    <source>
        <dbReference type="PDB" id="5KKL"/>
    </source>
</evidence>
<evidence type="ECO:0007829" key="25">
    <source>
        <dbReference type="PDB" id="5VK3"/>
    </source>
</evidence>
<evidence type="ECO:0007829" key="26">
    <source>
        <dbReference type="PDB" id="5WFD"/>
    </source>
</evidence>
<keyword id="KW-0002">3D-structure</keyword>
<keyword id="KW-0156">Chromatin regulator</keyword>
<keyword id="KW-0539">Nucleus</keyword>
<keyword id="KW-1185">Reference proteome</keyword>
<keyword id="KW-0677">Repeat</keyword>
<keyword id="KW-0678">Repressor</keyword>
<keyword id="KW-0804">Transcription</keyword>
<keyword id="KW-0805">Transcription regulation</keyword>
<keyword id="KW-0853">WD repeat</keyword>
<dbReference type="EMBL" id="GL988041">
    <property type="protein sequence ID" value="EGS21151.1"/>
    <property type="molecule type" value="Genomic_DNA"/>
</dbReference>
<dbReference type="RefSeq" id="XP_006693447.1">
    <property type="nucleotide sequence ID" value="XM_006693384.1"/>
</dbReference>
<dbReference type="PDB" id="5BJS">
    <property type="method" value="X-ray"/>
    <property type="resolution" value="2.19 A"/>
    <property type="chains" value="A=1-565"/>
</dbReference>
<dbReference type="PDB" id="5KJH">
    <property type="method" value="X-ray"/>
    <property type="resolution" value="2.27 A"/>
    <property type="chains" value="A=1-565"/>
</dbReference>
<dbReference type="PDB" id="5KJI">
    <property type="method" value="X-ray"/>
    <property type="resolution" value="2.71 A"/>
    <property type="chains" value="A=1-565"/>
</dbReference>
<dbReference type="PDB" id="5KKL">
    <property type="method" value="X-ray"/>
    <property type="resolution" value="2.94 A"/>
    <property type="chains" value="A=1-565"/>
</dbReference>
<dbReference type="PDB" id="5M5G">
    <property type="method" value="X-ray"/>
    <property type="resolution" value="2.27 A"/>
    <property type="chains" value="A=1-565"/>
</dbReference>
<dbReference type="PDB" id="5TQR">
    <property type="method" value="X-ray"/>
    <property type="resolution" value="2.57 A"/>
    <property type="chains" value="A=1-565"/>
</dbReference>
<dbReference type="PDB" id="5VK3">
    <property type="method" value="X-ray"/>
    <property type="resolution" value="2.11 A"/>
    <property type="chains" value="A=1-565"/>
</dbReference>
<dbReference type="PDB" id="5WF7">
    <property type="method" value="X-ray"/>
    <property type="resolution" value="2.50 A"/>
    <property type="chains" value="A=1-565"/>
</dbReference>
<dbReference type="PDB" id="5WFC">
    <property type="method" value="X-ray"/>
    <property type="resolution" value="2.28 A"/>
    <property type="chains" value="A=1-565"/>
</dbReference>
<dbReference type="PDB" id="5WFD">
    <property type="method" value="X-ray"/>
    <property type="resolution" value="2.65 A"/>
    <property type="chains" value="A=1-565"/>
</dbReference>
<dbReference type="PDBsum" id="5BJS"/>
<dbReference type="PDBsum" id="5KJH"/>
<dbReference type="PDBsum" id="5KJI"/>
<dbReference type="PDBsum" id="5KKL"/>
<dbReference type="PDBsum" id="5M5G"/>
<dbReference type="PDBsum" id="5TQR"/>
<dbReference type="PDBsum" id="5VK3"/>
<dbReference type="PDBsum" id="5WF7"/>
<dbReference type="PDBsum" id="5WFC"/>
<dbReference type="PDBsum" id="5WFD"/>
<dbReference type="SMR" id="G0S8H7"/>
<dbReference type="STRING" id="759272.G0S8H7"/>
<dbReference type="GeneID" id="18257030"/>
<dbReference type="KEGG" id="cthr:CTHT_0029920"/>
<dbReference type="eggNOG" id="KOG1034">
    <property type="taxonomic scope" value="Eukaryota"/>
</dbReference>
<dbReference type="HOGENOM" id="CLU_025586_0_0_1"/>
<dbReference type="OMA" id="GRQVAWS"/>
<dbReference type="OrthoDB" id="7318948at2759"/>
<dbReference type="Proteomes" id="UP000008066">
    <property type="component" value="Unassembled WGS sequence"/>
</dbReference>
<dbReference type="GO" id="GO:0005634">
    <property type="term" value="C:nucleus"/>
    <property type="evidence" value="ECO:0007669"/>
    <property type="project" value="UniProtKB-SubCell"/>
</dbReference>
<dbReference type="GO" id="GO:0006325">
    <property type="term" value="P:chromatin organization"/>
    <property type="evidence" value="ECO:0007669"/>
    <property type="project" value="UniProtKB-KW"/>
</dbReference>
<dbReference type="Gene3D" id="2.130.10.10">
    <property type="entry name" value="YVTN repeat-like/Quinoprotein amine dehydrogenase"/>
    <property type="match status" value="1"/>
</dbReference>
<dbReference type="InterPro" id="IPR051243">
    <property type="entry name" value="PcG_WD-repeat"/>
</dbReference>
<dbReference type="InterPro" id="IPR053893">
    <property type="entry name" value="PRC2_EED-like_ins"/>
</dbReference>
<dbReference type="InterPro" id="IPR015943">
    <property type="entry name" value="WD40/YVTN_repeat-like_dom_sf"/>
</dbReference>
<dbReference type="InterPro" id="IPR036322">
    <property type="entry name" value="WD40_repeat_dom_sf"/>
</dbReference>
<dbReference type="InterPro" id="IPR001680">
    <property type="entry name" value="WD40_rpt"/>
</dbReference>
<dbReference type="PANTHER" id="PTHR10253">
    <property type="entry name" value="POLYCOMB PROTEIN"/>
    <property type="match status" value="1"/>
</dbReference>
<dbReference type="Pfam" id="PF22038">
    <property type="entry name" value="PRC2_EED_ins"/>
    <property type="match status" value="1"/>
</dbReference>
<dbReference type="Pfam" id="PF00400">
    <property type="entry name" value="WD40"/>
    <property type="match status" value="2"/>
</dbReference>
<dbReference type="SMART" id="SM00320">
    <property type="entry name" value="WD40"/>
    <property type="match status" value="4"/>
</dbReference>
<dbReference type="SUPFAM" id="SSF50978">
    <property type="entry name" value="WD40 repeat-like"/>
    <property type="match status" value="1"/>
</dbReference>
<dbReference type="PROSITE" id="PS50082">
    <property type="entry name" value="WD_REPEATS_2"/>
    <property type="match status" value="2"/>
</dbReference>
<dbReference type="PROSITE" id="PS50294">
    <property type="entry name" value="WD_REPEATS_REGION"/>
    <property type="match status" value="2"/>
</dbReference>
<protein>
    <recommendedName>
        <fullName evidence="9">Polycomb protein EED</fullName>
    </recommendedName>
</protein>